<accession>A2D5I1</accession>
<protein>
    <recommendedName>
        <fullName>Homeobox protein Hox-D4</fullName>
    </recommendedName>
</protein>
<gene>
    <name type="primary">HOXD4</name>
</gene>
<keyword id="KW-0217">Developmental protein</keyword>
<keyword id="KW-0238">DNA-binding</keyword>
<keyword id="KW-0371">Homeobox</keyword>
<keyword id="KW-0539">Nucleus</keyword>
<keyword id="KW-0804">Transcription</keyword>
<keyword id="KW-0805">Transcription regulation</keyword>
<feature type="chain" id="PRO_0000285434" description="Homeobox protein Hox-D4">
    <location>
        <begin position="1"/>
        <end position="255"/>
    </location>
</feature>
<feature type="DNA-binding region" description="Homeobox" evidence="3">
    <location>
        <begin position="154"/>
        <end position="213"/>
    </location>
</feature>
<feature type="region of interest" description="Disordered" evidence="4">
    <location>
        <begin position="28"/>
        <end position="128"/>
    </location>
</feature>
<feature type="region of interest" description="Disordered" evidence="4">
    <location>
        <begin position="212"/>
        <end position="255"/>
    </location>
</feature>
<feature type="short sequence motif" description="Antp-type hexapeptide">
    <location>
        <begin position="133"/>
        <end position="138"/>
    </location>
</feature>
<feature type="compositionally biased region" description="Pro residues" evidence="4">
    <location>
        <begin position="94"/>
        <end position="107"/>
    </location>
</feature>
<feature type="compositionally biased region" description="Low complexity" evidence="4">
    <location>
        <begin position="222"/>
        <end position="234"/>
    </location>
</feature>
<feature type="compositionally biased region" description="Basic and acidic residues" evidence="4">
    <location>
        <begin position="245"/>
        <end position="255"/>
    </location>
</feature>
<name>HXD4_LAGLA</name>
<reference key="1">
    <citation type="submission" date="2006-08" db="EMBL/GenBank/DDBJ databases">
        <title>Positive selection in transcription factor genes on the human lineage.</title>
        <authorList>
            <person name="Nickel G.C."/>
            <person name="Tefft D.L."/>
            <person name="Trevarthen K."/>
            <person name="Funt J."/>
            <person name="Adams M.D."/>
        </authorList>
    </citation>
    <scope>NUCLEOTIDE SEQUENCE [GENOMIC DNA]</scope>
</reference>
<sequence length="255" mass="27940">MVMSSYMVNSKYVDPKFPPCEEYLQGGYLGEQGTDYYGGGAQGADFQPPGLYPRPDFGEQPFGGGGPGTRSALPARGHGQEPGGPGGHYAAPGEPCPAPPAPPPAPLPGARACSQSDPKQPPPGTALKQPAVVYPWMKKVHVNSVNPNYTGGEPKRSRTAYTRQQVLELEKEFHFNRYLTRRRRIEIAHTLCLSERQIKIWFQNRRMKWKKDHKLPNTKGRSSSSSSSSSCSSSTAPSQHLQPMAKDHHTDLTTL</sequence>
<evidence type="ECO:0000250" key="1"/>
<evidence type="ECO:0000250" key="2">
    <source>
        <dbReference type="UniProtKB" id="P09016"/>
    </source>
</evidence>
<evidence type="ECO:0000255" key="3">
    <source>
        <dbReference type="PROSITE-ProRule" id="PRU00108"/>
    </source>
</evidence>
<evidence type="ECO:0000256" key="4">
    <source>
        <dbReference type="SAM" id="MobiDB-lite"/>
    </source>
</evidence>
<evidence type="ECO:0000305" key="5"/>
<organism>
    <name type="scientific">Lagothrix lagotricha</name>
    <name type="common">Brown woolly monkey</name>
    <name type="synonym">Humboldt's woolly monkey</name>
    <dbReference type="NCBI Taxonomy" id="9519"/>
    <lineage>
        <taxon>Eukaryota</taxon>
        <taxon>Metazoa</taxon>
        <taxon>Chordata</taxon>
        <taxon>Craniata</taxon>
        <taxon>Vertebrata</taxon>
        <taxon>Euteleostomi</taxon>
        <taxon>Mammalia</taxon>
        <taxon>Eutheria</taxon>
        <taxon>Euarchontoglires</taxon>
        <taxon>Primates</taxon>
        <taxon>Haplorrhini</taxon>
        <taxon>Platyrrhini</taxon>
        <taxon>Atelidae</taxon>
        <taxon>Atelinae</taxon>
        <taxon>Lagothrix</taxon>
    </lineage>
</organism>
<comment type="function">
    <text evidence="1">Sequence-specific transcription factor which is part of a developmental regulatory system that provides cells with specific positional identities on the anterior-posterior axis.</text>
</comment>
<comment type="subunit">
    <text evidence="2">Forms a DNA-binding heterodimer with transcription factor PBX1.</text>
</comment>
<comment type="subcellular location">
    <subcellularLocation>
        <location evidence="3">Nucleus</location>
    </subcellularLocation>
</comment>
<comment type="similarity">
    <text evidence="5">Belongs to the Antp homeobox family. Deformed subfamily.</text>
</comment>
<proteinExistence type="inferred from homology"/>
<dbReference type="EMBL" id="DQ976727">
    <property type="protein sequence ID" value="ABM68173.1"/>
    <property type="molecule type" value="Genomic_DNA"/>
</dbReference>
<dbReference type="SMR" id="A2D5I1"/>
<dbReference type="GO" id="GO:0005654">
    <property type="term" value="C:nucleoplasm"/>
    <property type="evidence" value="ECO:0007669"/>
    <property type="project" value="TreeGrafter"/>
</dbReference>
<dbReference type="GO" id="GO:0000981">
    <property type="term" value="F:DNA-binding transcription factor activity, RNA polymerase II-specific"/>
    <property type="evidence" value="ECO:0007669"/>
    <property type="project" value="InterPro"/>
</dbReference>
<dbReference type="GO" id="GO:0000978">
    <property type="term" value="F:RNA polymerase II cis-regulatory region sequence-specific DNA binding"/>
    <property type="evidence" value="ECO:0007669"/>
    <property type="project" value="TreeGrafter"/>
</dbReference>
<dbReference type="GO" id="GO:0009952">
    <property type="term" value="P:anterior/posterior pattern specification"/>
    <property type="evidence" value="ECO:0007669"/>
    <property type="project" value="TreeGrafter"/>
</dbReference>
<dbReference type="GO" id="GO:0048704">
    <property type="term" value="P:embryonic skeletal system morphogenesis"/>
    <property type="evidence" value="ECO:0007669"/>
    <property type="project" value="TreeGrafter"/>
</dbReference>
<dbReference type="GO" id="GO:0045944">
    <property type="term" value="P:positive regulation of transcription by RNA polymerase II"/>
    <property type="evidence" value="ECO:0007669"/>
    <property type="project" value="TreeGrafter"/>
</dbReference>
<dbReference type="CDD" id="cd00086">
    <property type="entry name" value="homeodomain"/>
    <property type="match status" value="1"/>
</dbReference>
<dbReference type="FunFam" id="1.10.10.60:FF:000029">
    <property type="entry name" value="Homeobox protein Hox-D4"/>
    <property type="match status" value="1"/>
</dbReference>
<dbReference type="Gene3D" id="1.10.10.60">
    <property type="entry name" value="Homeodomain-like"/>
    <property type="match status" value="1"/>
</dbReference>
<dbReference type="InterPro" id="IPR050609">
    <property type="entry name" value="Antp_homeobox_Deformed_sf"/>
</dbReference>
<dbReference type="InterPro" id="IPR001356">
    <property type="entry name" value="HD"/>
</dbReference>
<dbReference type="InterPro" id="IPR020479">
    <property type="entry name" value="HD_metazoa"/>
</dbReference>
<dbReference type="InterPro" id="IPR017995">
    <property type="entry name" value="Homeobox_antennapedia"/>
</dbReference>
<dbReference type="InterPro" id="IPR001827">
    <property type="entry name" value="Homeobox_Antennapedia_CS"/>
</dbReference>
<dbReference type="InterPro" id="IPR017970">
    <property type="entry name" value="Homeobox_CS"/>
</dbReference>
<dbReference type="InterPro" id="IPR009057">
    <property type="entry name" value="Homeodomain-like_sf"/>
</dbReference>
<dbReference type="PANTHER" id="PTHR45771:SF5">
    <property type="entry name" value="HOMEOBOX PROTEIN HOX-D4"/>
    <property type="match status" value="1"/>
</dbReference>
<dbReference type="PANTHER" id="PTHR45771">
    <property type="entry name" value="HOMEOTIC PROTEIN DEFORMED"/>
    <property type="match status" value="1"/>
</dbReference>
<dbReference type="Pfam" id="PF00046">
    <property type="entry name" value="Homeodomain"/>
    <property type="match status" value="1"/>
</dbReference>
<dbReference type="PRINTS" id="PR00025">
    <property type="entry name" value="ANTENNAPEDIA"/>
</dbReference>
<dbReference type="PRINTS" id="PR00024">
    <property type="entry name" value="HOMEOBOX"/>
</dbReference>
<dbReference type="SMART" id="SM00389">
    <property type="entry name" value="HOX"/>
    <property type="match status" value="1"/>
</dbReference>
<dbReference type="SUPFAM" id="SSF46689">
    <property type="entry name" value="Homeodomain-like"/>
    <property type="match status" value="1"/>
</dbReference>
<dbReference type="PROSITE" id="PS00032">
    <property type="entry name" value="ANTENNAPEDIA"/>
    <property type="match status" value="1"/>
</dbReference>
<dbReference type="PROSITE" id="PS00027">
    <property type="entry name" value="HOMEOBOX_1"/>
    <property type="match status" value="1"/>
</dbReference>
<dbReference type="PROSITE" id="PS50071">
    <property type="entry name" value="HOMEOBOX_2"/>
    <property type="match status" value="1"/>
</dbReference>